<dbReference type="EMBL" id="M33815">
    <property type="protein sequence ID" value="AAA26573.1"/>
    <property type="molecule type" value="Genomic_DNA"/>
</dbReference>
<dbReference type="PIR" id="A35108">
    <property type="entry name" value="QRSEUA"/>
</dbReference>
<dbReference type="RefSeq" id="WP_016927639.1">
    <property type="nucleotide sequence ID" value="NZ_VOUR01000004.1"/>
</dbReference>
<dbReference type="PDB" id="1XVY">
    <property type="method" value="X-ray"/>
    <property type="resolution" value="1.74 A"/>
    <property type="chains" value="A=30-338"/>
</dbReference>
<dbReference type="PDBsum" id="1XVY"/>
<dbReference type="SMR" id="P21408"/>
<dbReference type="STRING" id="273526.SMDB11_1779"/>
<dbReference type="DrugBank" id="DB04272">
    <property type="generic name" value="Citric acid"/>
</dbReference>
<dbReference type="TCDB" id="3.A.1.10.1">
    <property type="family name" value="the atp-binding cassette (abc) superfamily"/>
</dbReference>
<dbReference type="PATRIC" id="fig|615.99.peg.2970"/>
<dbReference type="EvolutionaryTrace" id="P21408"/>
<dbReference type="GO" id="GO:0030288">
    <property type="term" value="C:outer membrane-bounded periplasmic space"/>
    <property type="evidence" value="ECO:0007669"/>
    <property type="project" value="TreeGrafter"/>
</dbReference>
<dbReference type="GO" id="GO:0046872">
    <property type="term" value="F:metal ion binding"/>
    <property type="evidence" value="ECO:0007669"/>
    <property type="project" value="UniProtKB-KW"/>
</dbReference>
<dbReference type="GO" id="GO:0006826">
    <property type="term" value="P:iron ion transport"/>
    <property type="evidence" value="ECO:0007669"/>
    <property type="project" value="UniProtKB-KW"/>
</dbReference>
<dbReference type="GO" id="GO:0055085">
    <property type="term" value="P:transmembrane transport"/>
    <property type="evidence" value="ECO:0007669"/>
    <property type="project" value="InterPro"/>
</dbReference>
<dbReference type="CDD" id="cd13543">
    <property type="entry name" value="PBP2_Fbp"/>
    <property type="match status" value="1"/>
</dbReference>
<dbReference type="Gene3D" id="3.40.190.10">
    <property type="entry name" value="Periplasmic binding protein-like II"/>
    <property type="match status" value="2"/>
</dbReference>
<dbReference type="InterPro" id="IPR026045">
    <property type="entry name" value="Ferric-bd"/>
</dbReference>
<dbReference type="InterPro" id="IPR006061">
    <property type="entry name" value="SBP_1_CS"/>
</dbReference>
<dbReference type="PANTHER" id="PTHR30006:SF15">
    <property type="entry name" value="IRON-UTILIZATION PERIPLASMIC PROTEIN"/>
    <property type="match status" value="1"/>
</dbReference>
<dbReference type="PANTHER" id="PTHR30006">
    <property type="entry name" value="THIAMINE-BINDING PERIPLASMIC PROTEIN-RELATED"/>
    <property type="match status" value="1"/>
</dbReference>
<dbReference type="Pfam" id="PF13343">
    <property type="entry name" value="SBP_bac_6"/>
    <property type="match status" value="1"/>
</dbReference>
<dbReference type="PIRSF" id="PIRSF002825">
    <property type="entry name" value="CfbpA"/>
    <property type="match status" value="1"/>
</dbReference>
<dbReference type="SUPFAM" id="SSF53850">
    <property type="entry name" value="Periplasmic binding protein-like II"/>
    <property type="match status" value="1"/>
</dbReference>
<dbReference type="PROSITE" id="PS01037">
    <property type="entry name" value="SBP_BACTERIAL_1"/>
    <property type="match status" value="1"/>
</dbReference>
<proteinExistence type="evidence at protein level"/>
<sequence length="338" mass="36157">MKLRISSLGPVALLASSMMLAFGAQAASADQGIVIYNAQHENLVKSWVDGFTKDTGIKVTLRNGGDSELGNQLVQEGSASPADVFLTENSPAMVLVDNAKLFAPLDAATLAQVEPQYRPSHGRWIGIAARSTVFVYNPAKLSDAQLPKSLLDLAKPEWKGRWAASPSGADFQAIVSALLELKGEKATLAWLKAMKTNFTAYKGNSTVMKAVNAGQVDSGVIYHYYPFVDGAKTGENSNNIKLYYFKHQDPGAFVSISGGGVLASSKHQQQAQAFIKWITGKQGQEILRTNNAFEYAVGVGAASNPKLVPLKDLDAPKVDAAQLNSKKVVELMTEAGLL</sequence>
<keyword id="KW-0002">3D-structure</keyword>
<keyword id="KW-0406">Ion transport</keyword>
<keyword id="KW-0408">Iron</keyword>
<keyword id="KW-0410">Iron transport</keyword>
<keyword id="KW-0479">Metal-binding</keyword>
<keyword id="KW-0574">Periplasm</keyword>
<keyword id="KW-0732">Signal</keyword>
<keyword id="KW-0813">Transport</keyword>
<organism>
    <name type="scientific">Serratia marcescens</name>
    <dbReference type="NCBI Taxonomy" id="615"/>
    <lineage>
        <taxon>Bacteria</taxon>
        <taxon>Pseudomonadati</taxon>
        <taxon>Pseudomonadota</taxon>
        <taxon>Gammaproteobacteria</taxon>
        <taxon>Enterobacterales</taxon>
        <taxon>Yersiniaceae</taxon>
        <taxon>Serratia</taxon>
    </lineage>
</organism>
<accession>P21408</accession>
<name>FBPA_SERMA</name>
<evidence type="ECO:0000250" key="1"/>
<evidence type="ECO:0000255" key="2"/>
<evidence type="ECO:0000305" key="3"/>
<evidence type="ECO:0007829" key="4">
    <source>
        <dbReference type="PDB" id="1XVY"/>
    </source>
</evidence>
<reference key="1">
    <citation type="journal article" date="1990" name="J. Bacteriol.">
        <title>Nucleotide sequences of the sfuA, sfuB, and sfuC genes of Serratia marcescens suggest a periplasmic-binding-protein-dependent iron transport mechanism.</title>
        <authorList>
            <person name="Angerer A."/>
            <person name="Gaisser S."/>
            <person name="Braun V."/>
        </authorList>
    </citation>
    <scope>NUCLEOTIDE SEQUENCE [GENOMIC DNA]</scope>
</reference>
<gene>
    <name type="primary">fbpA</name>
    <name type="synonym">sfuA</name>
</gene>
<comment type="function">
    <text evidence="1">Part of the ABC transporter complex FbpABC (TC 3.A.1.10.1) involved in Fe(3+) ions import. This protein specifically binds Fe(3+) and is involved in its transmembrane transport (By similarity).</text>
</comment>
<comment type="subunit">
    <text evidence="3">The complex is composed of two ATP-binding proteins (FbpC), two transmembrane proteins (FbpB) and a solute-binding protein (FbpA).</text>
</comment>
<comment type="subcellular location">
    <subcellularLocation>
        <location evidence="3">Periplasm</location>
    </subcellularLocation>
</comment>
<comment type="similarity">
    <text evidence="3">Belongs to the bacterial solute-binding protein 1 family.</text>
</comment>
<protein>
    <recommendedName>
        <fullName>Fe(3+)-binding periplasmic protein</fullName>
    </recommendedName>
    <alternativeName>
        <fullName>Iron(III)-binding periplasmic protein</fullName>
    </alternativeName>
</protein>
<feature type="signal peptide" evidence="2">
    <location>
        <begin position="1"/>
        <end position="26"/>
    </location>
</feature>
<feature type="chain" id="PRO_0000031704" description="Fe(3+)-binding periplasmic protein">
    <location>
        <begin position="27"/>
        <end position="338"/>
    </location>
</feature>
<feature type="binding site" evidence="1">
    <location>
        <position position="40"/>
    </location>
    <ligand>
        <name>Fe cation</name>
        <dbReference type="ChEBI" id="CHEBI:24875"/>
    </ligand>
</feature>
<feature type="binding site" evidence="1">
    <location>
        <position position="88"/>
    </location>
    <ligand>
        <name>Fe cation</name>
        <dbReference type="ChEBI" id="CHEBI:24875"/>
    </ligand>
</feature>
<feature type="binding site" evidence="1">
    <location>
        <position position="224"/>
    </location>
    <ligand>
        <name>Fe cation</name>
        <dbReference type="ChEBI" id="CHEBI:24875"/>
    </ligand>
</feature>
<feature type="binding site" evidence="1">
    <location>
        <position position="225"/>
    </location>
    <ligand>
        <name>Fe cation</name>
        <dbReference type="ChEBI" id="CHEBI:24875"/>
    </ligand>
</feature>
<feature type="strand" evidence="4">
    <location>
        <begin position="33"/>
        <end position="37"/>
    </location>
</feature>
<feature type="helix" evidence="4">
    <location>
        <begin position="41"/>
        <end position="55"/>
    </location>
</feature>
<feature type="strand" evidence="4">
    <location>
        <begin position="59"/>
        <end position="63"/>
    </location>
</feature>
<feature type="helix" evidence="4">
    <location>
        <begin position="66"/>
        <end position="76"/>
    </location>
</feature>
<feature type="helix" evidence="4">
    <location>
        <begin position="77"/>
        <end position="79"/>
    </location>
</feature>
<feature type="strand" evidence="4">
    <location>
        <begin position="83"/>
        <end position="86"/>
    </location>
</feature>
<feature type="strand" evidence="4">
    <location>
        <begin position="88"/>
        <end position="90"/>
    </location>
</feature>
<feature type="helix" evidence="4">
    <location>
        <begin position="91"/>
        <end position="98"/>
    </location>
</feature>
<feature type="helix" evidence="4">
    <location>
        <begin position="107"/>
        <end position="110"/>
    </location>
</feature>
<feature type="helix" evidence="4">
    <location>
        <begin position="115"/>
        <end position="117"/>
    </location>
</feature>
<feature type="strand" evidence="4">
    <location>
        <begin position="123"/>
        <end position="136"/>
    </location>
</feature>
<feature type="turn" evidence="4">
    <location>
        <begin position="138"/>
        <end position="140"/>
    </location>
</feature>
<feature type="helix" evidence="4">
    <location>
        <begin position="143"/>
        <end position="145"/>
    </location>
</feature>
<feature type="helix" evidence="4">
    <location>
        <begin position="150"/>
        <end position="154"/>
    </location>
</feature>
<feature type="helix" evidence="4">
    <location>
        <begin position="156"/>
        <end position="158"/>
    </location>
</feature>
<feature type="strand" evidence="4">
    <location>
        <begin position="161"/>
        <end position="164"/>
    </location>
</feature>
<feature type="helix" evidence="4">
    <location>
        <begin position="169"/>
        <end position="197"/>
    </location>
</feature>
<feature type="strand" evidence="4">
    <location>
        <begin position="198"/>
        <end position="200"/>
    </location>
</feature>
<feature type="helix" evidence="4">
    <location>
        <begin position="204"/>
        <end position="212"/>
    </location>
</feature>
<feature type="strand" evidence="4">
    <location>
        <begin position="215"/>
        <end position="222"/>
    </location>
</feature>
<feature type="helix" evidence="4">
    <location>
        <begin position="224"/>
        <end position="231"/>
    </location>
</feature>
<feature type="turn" evidence="4">
    <location>
        <begin position="235"/>
        <end position="239"/>
    </location>
</feature>
<feature type="strand" evidence="4">
    <location>
        <begin position="241"/>
        <end position="243"/>
    </location>
</feature>
<feature type="helix" evidence="4">
    <location>
        <begin position="250"/>
        <end position="252"/>
    </location>
</feature>
<feature type="strand" evidence="4">
    <location>
        <begin position="254"/>
        <end position="262"/>
    </location>
</feature>
<feature type="helix" evidence="4">
    <location>
        <begin position="268"/>
        <end position="279"/>
    </location>
</feature>
<feature type="helix" evidence="4">
    <location>
        <begin position="281"/>
        <end position="289"/>
    </location>
</feature>
<feature type="strand" evidence="4">
    <location>
        <begin position="290"/>
        <end position="292"/>
    </location>
</feature>
<feature type="helix" evidence="4">
    <location>
        <begin position="310"/>
        <end position="313"/>
    </location>
</feature>
<feature type="helix" evidence="4">
    <location>
        <begin position="320"/>
        <end position="322"/>
    </location>
</feature>
<feature type="helix" evidence="4">
    <location>
        <begin position="325"/>
        <end position="334"/>
    </location>
</feature>